<feature type="chain" id="PRO_0000340377" description="DNA ligase">
    <location>
        <begin position="1"/>
        <end position="671"/>
    </location>
</feature>
<feature type="domain" description="BRCT" evidence="1">
    <location>
        <begin position="593"/>
        <end position="671"/>
    </location>
</feature>
<feature type="active site" description="N6-AMP-lysine intermediate" evidence="1">
    <location>
        <position position="115"/>
    </location>
</feature>
<feature type="binding site" evidence="1">
    <location>
        <begin position="32"/>
        <end position="36"/>
    </location>
    <ligand>
        <name>NAD(+)</name>
        <dbReference type="ChEBI" id="CHEBI:57540"/>
    </ligand>
</feature>
<feature type="binding site" evidence="1">
    <location>
        <begin position="81"/>
        <end position="82"/>
    </location>
    <ligand>
        <name>NAD(+)</name>
        <dbReference type="ChEBI" id="CHEBI:57540"/>
    </ligand>
</feature>
<feature type="binding site" evidence="1">
    <location>
        <position position="113"/>
    </location>
    <ligand>
        <name>NAD(+)</name>
        <dbReference type="ChEBI" id="CHEBI:57540"/>
    </ligand>
</feature>
<feature type="binding site" evidence="1">
    <location>
        <position position="136"/>
    </location>
    <ligand>
        <name>NAD(+)</name>
        <dbReference type="ChEBI" id="CHEBI:57540"/>
    </ligand>
</feature>
<feature type="binding site" evidence="1">
    <location>
        <position position="173"/>
    </location>
    <ligand>
        <name>NAD(+)</name>
        <dbReference type="ChEBI" id="CHEBI:57540"/>
    </ligand>
</feature>
<feature type="binding site" evidence="1">
    <location>
        <position position="290"/>
    </location>
    <ligand>
        <name>NAD(+)</name>
        <dbReference type="ChEBI" id="CHEBI:57540"/>
    </ligand>
</feature>
<feature type="binding site" evidence="1">
    <location>
        <position position="314"/>
    </location>
    <ligand>
        <name>NAD(+)</name>
        <dbReference type="ChEBI" id="CHEBI:57540"/>
    </ligand>
</feature>
<feature type="binding site" evidence="1">
    <location>
        <position position="408"/>
    </location>
    <ligand>
        <name>Zn(2+)</name>
        <dbReference type="ChEBI" id="CHEBI:29105"/>
    </ligand>
</feature>
<feature type="binding site" evidence="1">
    <location>
        <position position="411"/>
    </location>
    <ligand>
        <name>Zn(2+)</name>
        <dbReference type="ChEBI" id="CHEBI:29105"/>
    </ligand>
</feature>
<feature type="binding site" evidence="1">
    <location>
        <position position="426"/>
    </location>
    <ligand>
        <name>Zn(2+)</name>
        <dbReference type="ChEBI" id="CHEBI:29105"/>
    </ligand>
</feature>
<feature type="binding site" evidence="1">
    <location>
        <position position="432"/>
    </location>
    <ligand>
        <name>Zn(2+)</name>
        <dbReference type="ChEBI" id="CHEBI:29105"/>
    </ligand>
</feature>
<evidence type="ECO:0000255" key="1">
    <source>
        <dbReference type="HAMAP-Rule" id="MF_01588"/>
    </source>
</evidence>
<gene>
    <name evidence="1" type="primary">ligA</name>
    <name type="ordered locus">SARI_00461</name>
</gene>
<name>DNLJ_SALAR</name>
<accession>A9MIG0</accession>
<keyword id="KW-0227">DNA damage</keyword>
<keyword id="KW-0234">DNA repair</keyword>
<keyword id="KW-0235">DNA replication</keyword>
<keyword id="KW-0436">Ligase</keyword>
<keyword id="KW-0460">Magnesium</keyword>
<keyword id="KW-0464">Manganese</keyword>
<keyword id="KW-0479">Metal-binding</keyword>
<keyword id="KW-0520">NAD</keyword>
<keyword id="KW-1185">Reference proteome</keyword>
<keyword id="KW-0862">Zinc</keyword>
<dbReference type="EC" id="6.5.1.2" evidence="1"/>
<dbReference type="EMBL" id="CP000880">
    <property type="protein sequence ID" value="ABX20397.1"/>
    <property type="molecule type" value="Genomic_DNA"/>
</dbReference>
<dbReference type="SMR" id="A9MIG0"/>
<dbReference type="STRING" id="41514.SARI_00461"/>
<dbReference type="KEGG" id="ses:SARI_00461"/>
<dbReference type="HOGENOM" id="CLU_007764_2_1_6"/>
<dbReference type="Proteomes" id="UP000002084">
    <property type="component" value="Chromosome"/>
</dbReference>
<dbReference type="GO" id="GO:0005829">
    <property type="term" value="C:cytosol"/>
    <property type="evidence" value="ECO:0007669"/>
    <property type="project" value="TreeGrafter"/>
</dbReference>
<dbReference type="GO" id="GO:0003677">
    <property type="term" value="F:DNA binding"/>
    <property type="evidence" value="ECO:0007669"/>
    <property type="project" value="InterPro"/>
</dbReference>
<dbReference type="GO" id="GO:0003911">
    <property type="term" value="F:DNA ligase (NAD+) activity"/>
    <property type="evidence" value="ECO:0007669"/>
    <property type="project" value="UniProtKB-UniRule"/>
</dbReference>
<dbReference type="GO" id="GO:0046872">
    <property type="term" value="F:metal ion binding"/>
    <property type="evidence" value="ECO:0007669"/>
    <property type="project" value="UniProtKB-KW"/>
</dbReference>
<dbReference type="GO" id="GO:0006281">
    <property type="term" value="P:DNA repair"/>
    <property type="evidence" value="ECO:0007669"/>
    <property type="project" value="UniProtKB-KW"/>
</dbReference>
<dbReference type="GO" id="GO:0006260">
    <property type="term" value="P:DNA replication"/>
    <property type="evidence" value="ECO:0007669"/>
    <property type="project" value="UniProtKB-KW"/>
</dbReference>
<dbReference type="CDD" id="cd17748">
    <property type="entry name" value="BRCT_DNA_ligase_like"/>
    <property type="match status" value="1"/>
</dbReference>
<dbReference type="CDD" id="cd00114">
    <property type="entry name" value="LIGANc"/>
    <property type="match status" value="1"/>
</dbReference>
<dbReference type="FunFam" id="1.10.150.20:FF:000006">
    <property type="entry name" value="DNA ligase"/>
    <property type="match status" value="1"/>
</dbReference>
<dbReference type="FunFam" id="1.10.150.20:FF:000007">
    <property type="entry name" value="DNA ligase"/>
    <property type="match status" value="1"/>
</dbReference>
<dbReference type="FunFam" id="1.10.287.610:FF:000002">
    <property type="entry name" value="DNA ligase"/>
    <property type="match status" value="1"/>
</dbReference>
<dbReference type="FunFam" id="2.40.50.140:FF:000012">
    <property type="entry name" value="DNA ligase"/>
    <property type="match status" value="1"/>
</dbReference>
<dbReference type="FunFam" id="3.30.470.30:FF:000001">
    <property type="entry name" value="DNA ligase"/>
    <property type="match status" value="1"/>
</dbReference>
<dbReference type="FunFam" id="3.40.50.10190:FF:000004">
    <property type="entry name" value="DNA ligase"/>
    <property type="match status" value="1"/>
</dbReference>
<dbReference type="FunFam" id="6.20.10.30:FF:000001">
    <property type="entry name" value="DNA ligase"/>
    <property type="match status" value="1"/>
</dbReference>
<dbReference type="Gene3D" id="6.20.10.30">
    <property type="match status" value="1"/>
</dbReference>
<dbReference type="Gene3D" id="1.10.150.20">
    <property type="entry name" value="5' to 3' exonuclease, C-terminal subdomain"/>
    <property type="match status" value="2"/>
</dbReference>
<dbReference type="Gene3D" id="3.40.50.10190">
    <property type="entry name" value="BRCT domain"/>
    <property type="match status" value="1"/>
</dbReference>
<dbReference type="Gene3D" id="3.30.470.30">
    <property type="entry name" value="DNA ligase/mRNA capping enzyme"/>
    <property type="match status" value="1"/>
</dbReference>
<dbReference type="Gene3D" id="1.10.287.610">
    <property type="entry name" value="Helix hairpin bin"/>
    <property type="match status" value="1"/>
</dbReference>
<dbReference type="Gene3D" id="2.40.50.140">
    <property type="entry name" value="Nucleic acid-binding proteins"/>
    <property type="match status" value="1"/>
</dbReference>
<dbReference type="HAMAP" id="MF_01588">
    <property type="entry name" value="DNA_ligase_A"/>
    <property type="match status" value="1"/>
</dbReference>
<dbReference type="InterPro" id="IPR001357">
    <property type="entry name" value="BRCT_dom"/>
</dbReference>
<dbReference type="InterPro" id="IPR036420">
    <property type="entry name" value="BRCT_dom_sf"/>
</dbReference>
<dbReference type="InterPro" id="IPR041663">
    <property type="entry name" value="DisA/LigA_HHH"/>
</dbReference>
<dbReference type="InterPro" id="IPR001679">
    <property type="entry name" value="DNA_ligase"/>
</dbReference>
<dbReference type="InterPro" id="IPR018239">
    <property type="entry name" value="DNA_ligase_AS"/>
</dbReference>
<dbReference type="InterPro" id="IPR033136">
    <property type="entry name" value="DNA_ligase_CS"/>
</dbReference>
<dbReference type="InterPro" id="IPR013839">
    <property type="entry name" value="DNAligase_adenylation"/>
</dbReference>
<dbReference type="InterPro" id="IPR013840">
    <property type="entry name" value="DNAligase_N"/>
</dbReference>
<dbReference type="InterPro" id="IPR003583">
    <property type="entry name" value="Hlx-hairpin-Hlx_DNA-bd_motif"/>
</dbReference>
<dbReference type="InterPro" id="IPR012340">
    <property type="entry name" value="NA-bd_OB-fold"/>
</dbReference>
<dbReference type="InterPro" id="IPR004150">
    <property type="entry name" value="NAD_DNA_ligase_OB"/>
</dbReference>
<dbReference type="InterPro" id="IPR010994">
    <property type="entry name" value="RuvA_2-like"/>
</dbReference>
<dbReference type="InterPro" id="IPR004149">
    <property type="entry name" value="Znf_DNAligase_C4"/>
</dbReference>
<dbReference type="NCBIfam" id="TIGR00575">
    <property type="entry name" value="dnlj"/>
    <property type="match status" value="1"/>
</dbReference>
<dbReference type="NCBIfam" id="NF005932">
    <property type="entry name" value="PRK07956.1"/>
    <property type="match status" value="1"/>
</dbReference>
<dbReference type="PANTHER" id="PTHR23389">
    <property type="entry name" value="CHROMOSOME TRANSMISSION FIDELITY FACTOR 18"/>
    <property type="match status" value="1"/>
</dbReference>
<dbReference type="PANTHER" id="PTHR23389:SF9">
    <property type="entry name" value="DNA LIGASE"/>
    <property type="match status" value="1"/>
</dbReference>
<dbReference type="Pfam" id="PF00533">
    <property type="entry name" value="BRCT"/>
    <property type="match status" value="1"/>
</dbReference>
<dbReference type="Pfam" id="PF01653">
    <property type="entry name" value="DNA_ligase_aden"/>
    <property type="match status" value="1"/>
</dbReference>
<dbReference type="Pfam" id="PF03120">
    <property type="entry name" value="DNA_ligase_OB"/>
    <property type="match status" value="1"/>
</dbReference>
<dbReference type="Pfam" id="PF03119">
    <property type="entry name" value="DNA_ligase_ZBD"/>
    <property type="match status" value="1"/>
</dbReference>
<dbReference type="Pfam" id="PF12826">
    <property type="entry name" value="HHH_2"/>
    <property type="match status" value="1"/>
</dbReference>
<dbReference type="Pfam" id="PF14520">
    <property type="entry name" value="HHH_5"/>
    <property type="match status" value="1"/>
</dbReference>
<dbReference type="Pfam" id="PF22745">
    <property type="entry name" value="Nlig-Ia"/>
    <property type="match status" value="1"/>
</dbReference>
<dbReference type="PIRSF" id="PIRSF001604">
    <property type="entry name" value="LigA"/>
    <property type="match status" value="1"/>
</dbReference>
<dbReference type="SMART" id="SM00292">
    <property type="entry name" value="BRCT"/>
    <property type="match status" value="1"/>
</dbReference>
<dbReference type="SMART" id="SM00278">
    <property type="entry name" value="HhH1"/>
    <property type="match status" value="4"/>
</dbReference>
<dbReference type="SMART" id="SM00532">
    <property type="entry name" value="LIGANc"/>
    <property type="match status" value="1"/>
</dbReference>
<dbReference type="SUPFAM" id="SSF52113">
    <property type="entry name" value="BRCT domain"/>
    <property type="match status" value="1"/>
</dbReference>
<dbReference type="SUPFAM" id="SSF56091">
    <property type="entry name" value="DNA ligase/mRNA capping enzyme, catalytic domain"/>
    <property type="match status" value="1"/>
</dbReference>
<dbReference type="SUPFAM" id="SSF50249">
    <property type="entry name" value="Nucleic acid-binding proteins"/>
    <property type="match status" value="1"/>
</dbReference>
<dbReference type="SUPFAM" id="SSF47781">
    <property type="entry name" value="RuvA domain 2-like"/>
    <property type="match status" value="1"/>
</dbReference>
<dbReference type="PROSITE" id="PS50172">
    <property type="entry name" value="BRCT"/>
    <property type="match status" value="1"/>
</dbReference>
<dbReference type="PROSITE" id="PS01055">
    <property type="entry name" value="DNA_LIGASE_N1"/>
    <property type="match status" value="1"/>
</dbReference>
<dbReference type="PROSITE" id="PS01056">
    <property type="entry name" value="DNA_LIGASE_N2"/>
    <property type="match status" value="1"/>
</dbReference>
<sequence length="671" mass="73466">MEPIEQQLTELRTTLRHHEYLYHVMDAPEIPDAEYDRLMRELRALEAQRPDLITPDSPTQRVGAAPLTAFNQIRHEVPMLSLDNVFDEESFLAFNKRVQDRLKSTENVTWCCELKLDGLAVSILYENGVLVRAATRGDGTTGEDITSNVRTIRAIPLKLRGDNIPARLEVRGEVFLPQAGFEKINEEARRSGGKVFANPRNAAAGSLRQLDPRITAKRPLTFFCYGVGILEGGELPDTHLGRLLQFKAWGLPVSDRVTLCDSPQAVLAFYHNVEEDRPTLGFDIDGVVIKVNSLALQEQLGFVARAPRWAVAFKFPAQEQMTFVRDVEFQVGRTGAITPVARLEPVQVAGVLVSNATLHNADEIDRLGLRIGDKVVIRRAGDVIPQVVNVVLSERPEETRPIVFPTHCPVCGSDVERVEGEAVTRCTGGLICGAQRKESLKHFVSRRAMDVDGMGDKIIDQLVEREYVHTPADLFRLTAGKLTGLDRMGPKSAQNVVNALEKAKATIFARFLYALGIREVGEATAAGLAAYFGTLEALQAASIDELQKVPDVGIVVATHVFNFFAEESNREVIGQLLAEGVHWPAPVVINAQEIDSPFAGKTVVLTGSLSQMSRDDAKARLVELGAKVAGSVSKKTDLVIAGEAAGSKLAKAQELGIDVIDEAEMLRLLGV</sequence>
<organism>
    <name type="scientific">Salmonella arizonae (strain ATCC BAA-731 / CDC346-86 / RSK2980)</name>
    <dbReference type="NCBI Taxonomy" id="41514"/>
    <lineage>
        <taxon>Bacteria</taxon>
        <taxon>Pseudomonadati</taxon>
        <taxon>Pseudomonadota</taxon>
        <taxon>Gammaproteobacteria</taxon>
        <taxon>Enterobacterales</taxon>
        <taxon>Enterobacteriaceae</taxon>
        <taxon>Salmonella</taxon>
    </lineage>
</organism>
<proteinExistence type="inferred from homology"/>
<comment type="function">
    <text evidence="1">DNA ligase that catalyzes the formation of phosphodiester linkages between 5'-phosphoryl and 3'-hydroxyl groups in double-stranded DNA using NAD as a coenzyme and as the energy source for the reaction. It is essential for DNA replication and repair of damaged DNA.</text>
</comment>
<comment type="catalytic activity">
    <reaction evidence="1">
        <text>NAD(+) + (deoxyribonucleotide)n-3'-hydroxyl + 5'-phospho-(deoxyribonucleotide)m = (deoxyribonucleotide)n+m + AMP + beta-nicotinamide D-nucleotide.</text>
        <dbReference type="EC" id="6.5.1.2"/>
    </reaction>
</comment>
<comment type="cofactor">
    <cofactor evidence="1">
        <name>Mg(2+)</name>
        <dbReference type="ChEBI" id="CHEBI:18420"/>
    </cofactor>
    <cofactor evidence="1">
        <name>Mn(2+)</name>
        <dbReference type="ChEBI" id="CHEBI:29035"/>
    </cofactor>
</comment>
<comment type="similarity">
    <text evidence="1">Belongs to the NAD-dependent DNA ligase family. LigA subfamily.</text>
</comment>
<reference key="1">
    <citation type="submission" date="2007-11" db="EMBL/GenBank/DDBJ databases">
        <authorList>
            <consortium name="The Salmonella enterica serovar Arizonae Genome Sequencing Project"/>
            <person name="McClelland M."/>
            <person name="Sanderson E.K."/>
            <person name="Porwollik S."/>
            <person name="Spieth J."/>
            <person name="Clifton W.S."/>
            <person name="Fulton R."/>
            <person name="Chunyan W."/>
            <person name="Wollam A."/>
            <person name="Shah N."/>
            <person name="Pepin K."/>
            <person name="Bhonagiri V."/>
            <person name="Nash W."/>
            <person name="Johnson M."/>
            <person name="Thiruvilangam P."/>
            <person name="Wilson R."/>
        </authorList>
    </citation>
    <scope>NUCLEOTIDE SEQUENCE [LARGE SCALE GENOMIC DNA]</scope>
    <source>
        <strain>ATCC BAA-731 / CDC346-86 / RSK2980</strain>
    </source>
</reference>
<protein>
    <recommendedName>
        <fullName evidence="1">DNA ligase</fullName>
        <ecNumber evidence="1">6.5.1.2</ecNumber>
    </recommendedName>
    <alternativeName>
        <fullName evidence="1">Polydeoxyribonucleotide synthase [NAD(+)]</fullName>
    </alternativeName>
</protein>